<sequence length="36" mass="4168">MLTLKLFVYTVVIFFVSLFIFGFLSNDPGRNPGREE</sequence>
<geneLocation type="chloroplast"/>
<comment type="function">
    <text evidence="1">One of the components of the core complex of photosystem II (PSII), required for its stability and/or assembly. PSII is a light-driven water:plastoquinone oxidoreductase that uses light energy to abstract electrons from H(2)O, generating O(2) and a proton gradient subsequently used for ATP formation. It consists of a core antenna complex that captures photons, and an electron transfer chain that converts photonic excitation into a charge separation.</text>
</comment>
<comment type="subunit">
    <text evidence="1">PSII is composed of 1 copy each of membrane proteins PsbA, PsbB, PsbC, PsbD, PsbE, PsbF, PsbH, PsbI, PsbJ, PsbK, PsbL, PsbM, PsbT, PsbX, PsbY, PsbZ, Psb30/Ycf12, at least 3 peripheral proteins of the oxygen-evolving complex and a large number of cofactors. It forms dimeric complexes.</text>
</comment>
<comment type="subcellular location">
    <subcellularLocation>
        <location evidence="1">Plastid</location>
        <location evidence="1">Chloroplast thylakoid membrane</location>
        <topology evidence="1">Single-pass membrane protein</topology>
    </subcellularLocation>
</comment>
<comment type="similarity">
    <text evidence="1">Belongs to the PsbI family.</text>
</comment>
<reference key="1">
    <citation type="submission" date="2005-03" db="EMBL/GenBank/DDBJ databases">
        <title>Complete structure of the chloroplast genome of Populus alba.</title>
        <authorList>
            <person name="Okumura S."/>
            <person name="Yamashita A."/>
            <person name="Kanamoto H."/>
            <person name="Hattori M."/>
            <person name="Takase H."/>
            <person name="Tomizawa K."/>
        </authorList>
    </citation>
    <scope>NUCLEOTIDE SEQUENCE [LARGE SCALE GENOMIC DNA]</scope>
</reference>
<proteinExistence type="inferred from homology"/>
<dbReference type="EMBL" id="AP008956">
    <property type="protein sequence ID" value="BAE97189.1"/>
    <property type="molecule type" value="Genomic_DNA"/>
</dbReference>
<dbReference type="RefSeq" id="YP_665542.1">
    <property type="nucleotide sequence ID" value="NC_008235.1"/>
</dbReference>
<dbReference type="SMR" id="Q14FH3"/>
<dbReference type="GeneID" id="4178165"/>
<dbReference type="KEGG" id="palz:4178165"/>
<dbReference type="OrthoDB" id="10521at3646"/>
<dbReference type="GO" id="GO:0009535">
    <property type="term" value="C:chloroplast thylakoid membrane"/>
    <property type="evidence" value="ECO:0007669"/>
    <property type="project" value="UniProtKB-SubCell"/>
</dbReference>
<dbReference type="GO" id="GO:0009539">
    <property type="term" value="C:photosystem II reaction center"/>
    <property type="evidence" value="ECO:0007669"/>
    <property type="project" value="InterPro"/>
</dbReference>
<dbReference type="GO" id="GO:0015979">
    <property type="term" value="P:photosynthesis"/>
    <property type="evidence" value="ECO:0007669"/>
    <property type="project" value="UniProtKB-UniRule"/>
</dbReference>
<dbReference type="HAMAP" id="MF_01316">
    <property type="entry name" value="PSII_PsbI"/>
    <property type="match status" value="1"/>
</dbReference>
<dbReference type="InterPro" id="IPR003686">
    <property type="entry name" value="PSII_PsbI"/>
</dbReference>
<dbReference type="InterPro" id="IPR037271">
    <property type="entry name" value="PSII_PsbI_sf"/>
</dbReference>
<dbReference type="NCBIfam" id="NF002735">
    <property type="entry name" value="PRK02655.1"/>
    <property type="match status" value="1"/>
</dbReference>
<dbReference type="PANTHER" id="PTHR35772">
    <property type="entry name" value="PHOTOSYSTEM II REACTION CENTER PROTEIN I"/>
    <property type="match status" value="1"/>
</dbReference>
<dbReference type="PANTHER" id="PTHR35772:SF1">
    <property type="entry name" value="PHOTOSYSTEM II REACTION CENTER PROTEIN I"/>
    <property type="match status" value="1"/>
</dbReference>
<dbReference type="Pfam" id="PF02532">
    <property type="entry name" value="PsbI"/>
    <property type="match status" value="1"/>
</dbReference>
<dbReference type="SUPFAM" id="SSF161041">
    <property type="entry name" value="Photosystem II reaction center protein I, PsbI"/>
    <property type="match status" value="1"/>
</dbReference>
<protein>
    <recommendedName>
        <fullName evidence="1">Photosystem II reaction center protein I</fullName>
        <shortName evidence="1">PSII-I</shortName>
    </recommendedName>
    <alternativeName>
        <fullName evidence="1">PSII 4.8 kDa protein</fullName>
    </alternativeName>
</protein>
<gene>
    <name evidence="1" type="primary">psbI</name>
</gene>
<keyword id="KW-0150">Chloroplast</keyword>
<keyword id="KW-0472">Membrane</keyword>
<keyword id="KW-0602">Photosynthesis</keyword>
<keyword id="KW-0604">Photosystem II</keyword>
<keyword id="KW-0934">Plastid</keyword>
<keyword id="KW-0674">Reaction center</keyword>
<keyword id="KW-0793">Thylakoid</keyword>
<keyword id="KW-0812">Transmembrane</keyword>
<keyword id="KW-1133">Transmembrane helix</keyword>
<name>PSBI_POPAL</name>
<organism>
    <name type="scientific">Populus alba</name>
    <name type="common">White poplar</name>
    <dbReference type="NCBI Taxonomy" id="43335"/>
    <lineage>
        <taxon>Eukaryota</taxon>
        <taxon>Viridiplantae</taxon>
        <taxon>Streptophyta</taxon>
        <taxon>Embryophyta</taxon>
        <taxon>Tracheophyta</taxon>
        <taxon>Spermatophyta</taxon>
        <taxon>Magnoliopsida</taxon>
        <taxon>eudicotyledons</taxon>
        <taxon>Gunneridae</taxon>
        <taxon>Pentapetalae</taxon>
        <taxon>rosids</taxon>
        <taxon>fabids</taxon>
        <taxon>Malpighiales</taxon>
        <taxon>Salicaceae</taxon>
        <taxon>Saliceae</taxon>
        <taxon>Populus</taxon>
    </lineage>
</organism>
<evidence type="ECO:0000255" key="1">
    <source>
        <dbReference type="HAMAP-Rule" id="MF_01316"/>
    </source>
</evidence>
<feature type="chain" id="PRO_0000275806" description="Photosystem II reaction center protein I">
    <location>
        <begin position="1"/>
        <end position="36"/>
    </location>
</feature>
<feature type="transmembrane region" description="Helical" evidence="1">
    <location>
        <begin position="4"/>
        <end position="24"/>
    </location>
</feature>
<accession>Q14FH3</accession>